<accession>A1KLD6</accession>
<comment type="function">
    <text evidence="1">An essential GTPase which binds GTP, GDP and possibly (p)ppGpp with moderate affinity, with high nucleotide exchange rates and a fairly low GTP hydrolysis rate. Plays a role in control of the cell cycle, stress response, ribosome biogenesis and in those bacteria that undergo differentiation, in morphogenesis control.</text>
</comment>
<comment type="cofactor">
    <cofactor evidence="1">
        <name>Mg(2+)</name>
        <dbReference type="ChEBI" id="CHEBI:18420"/>
    </cofactor>
</comment>
<comment type="subunit">
    <text evidence="1">Monomer.</text>
</comment>
<comment type="subcellular location">
    <subcellularLocation>
        <location evidence="1">Cytoplasm</location>
    </subcellularLocation>
</comment>
<comment type="similarity">
    <text evidence="1">Belongs to the TRAFAC class OBG-HflX-like GTPase superfamily. OBG GTPase family.</text>
</comment>
<feature type="chain" id="PRO_0000386052" description="GTPase Obg">
    <location>
        <begin position="1"/>
        <end position="479"/>
    </location>
</feature>
<feature type="domain" description="Obg" evidence="3">
    <location>
        <begin position="2"/>
        <end position="159"/>
    </location>
</feature>
<feature type="domain" description="OBG-type G" evidence="1">
    <location>
        <begin position="160"/>
        <end position="340"/>
    </location>
</feature>
<feature type="domain" description="OCT" evidence="2">
    <location>
        <begin position="358"/>
        <end position="436"/>
    </location>
</feature>
<feature type="region of interest" description="Disordered" evidence="4">
    <location>
        <begin position="434"/>
        <end position="479"/>
    </location>
</feature>
<feature type="compositionally biased region" description="Basic and acidic residues" evidence="4">
    <location>
        <begin position="451"/>
        <end position="468"/>
    </location>
</feature>
<feature type="compositionally biased region" description="Basic residues" evidence="4">
    <location>
        <begin position="469"/>
        <end position="479"/>
    </location>
</feature>
<feature type="binding site" evidence="1">
    <location>
        <begin position="166"/>
        <end position="173"/>
    </location>
    <ligand>
        <name>GTP</name>
        <dbReference type="ChEBI" id="CHEBI:37565"/>
    </ligand>
</feature>
<feature type="binding site" evidence="1">
    <location>
        <position position="173"/>
    </location>
    <ligand>
        <name>Mg(2+)</name>
        <dbReference type="ChEBI" id="CHEBI:18420"/>
    </ligand>
</feature>
<feature type="binding site" evidence="1">
    <location>
        <begin position="191"/>
        <end position="195"/>
    </location>
    <ligand>
        <name>GTP</name>
        <dbReference type="ChEBI" id="CHEBI:37565"/>
    </ligand>
</feature>
<feature type="binding site" evidence="1">
    <location>
        <position position="193"/>
    </location>
    <ligand>
        <name>Mg(2+)</name>
        <dbReference type="ChEBI" id="CHEBI:18420"/>
    </ligand>
</feature>
<feature type="binding site" evidence="1">
    <location>
        <begin position="212"/>
        <end position="215"/>
    </location>
    <ligand>
        <name>GTP</name>
        <dbReference type="ChEBI" id="CHEBI:37565"/>
    </ligand>
</feature>
<feature type="binding site" evidence="1">
    <location>
        <begin position="292"/>
        <end position="295"/>
    </location>
    <ligand>
        <name>GTP</name>
        <dbReference type="ChEBI" id="CHEBI:37565"/>
    </ligand>
</feature>
<feature type="binding site" evidence="1">
    <location>
        <begin position="321"/>
        <end position="323"/>
    </location>
    <ligand>
        <name>GTP</name>
        <dbReference type="ChEBI" id="CHEBI:37565"/>
    </ligand>
</feature>
<keyword id="KW-0963">Cytoplasm</keyword>
<keyword id="KW-0342">GTP-binding</keyword>
<keyword id="KW-0378">Hydrolase</keyword>
<keyword id="KW-0460">Magnesium</keyword>
<keyword id="KW-0479">Metal-binding</keyword>
<keyword id="KW-0547">Nucleotide-binding</keyword>
<protein>
    <recommendedName>
        <fullName evidence="1">GTPase Obg</fullName>
        <ecNumber evidence="1">3.6.5.-</ecNumber>
    </recommendedName>
    <alternativeName>
        <fullName evidence="1">GTP-binding protein Obg</fullName>
    </alternativeName>
</protein>
<sequence length="479" mass="50461">MPRFVDRVVIHTRAGSGGNGCASVHREKFKPLGGPDGGNGGRGGSIVFVVDPQVHTLLDFHFRPHLTAASGKHGMGNNRDGAAGADLEVKVPEGTVVLDENGRLLADLVGAGTRFEAAAGGRGGLGNAALASRVRKAPGFALLGEKGQSRDLTLELKTVADVGLVGFPSAGKSSLVSAISAAKPKIADYPFTTLVPNLGVVSAGEHAFTVADVPGLIPGASRGRGLGLDFLRHIERCAVLVHVVDCATAEPGRDPISDIDALETELACYTPTLQGDAALGDLAARPRAVVLNKIDVPEARELAEFVRDDIAQRGWPVFCVSTATRENLQPLIFGLSQMISDYNAARPVAVPRRPVIRPIPVDDSGFTVEPDGHGGFVVSGARPERWIDQTNFDNDEAVGYLADRLARLGVEEELLRLGARSGCAVTIGEMTFDWEPQTPAGEPVAMSGRGTDPRLDSNKRVGAAERKAARSRRREHGDG</sequence>
<reference key="1">
    <citation type="journal article" date="2007" name="Proc. Natl. Acad. Sci. U.S.A.">
        <title>Genome plasticity of BCG and impact on vaccine efficacy.</title>
        <authorList>
            <person name="Brosch R."/>
            <person name="Gordon S.V."/>
            <person name="Garnier T."/>
            <person name="Eiglmeier K."/>
            <person name="Frigui W."/>
            <person name="Valenti P."/>
            <person name="Dos Santos S."/>
            <person name="Duthoy S."/>
            <person name="Lacroix C."/>
            <person name="Garcia-Pelayo C."/>
            <person name="Inwald J.K."/>
            <person name="Golby P."/>
            <person name="Garcia J.N."/>
            <person name="Hewinson R.G."/>
            <person name="Behr M.A."/>
            <person name="Quail M.A."/>
            <person name="Churcher C."/>
            <person name="Barrell B.G."/>
            <person name="Parkhill J."/>
            <person name="Cole S.T."/>
        </authorList>
    </citation>
    <scope>NUCLEOTIDE SEQUENCE [LARGE SCALE GENOMIC DNA]</scope>
    <source>
        <strain>BCG / Pasteur 1173P2</strain>
    </source>
</reference>
<evidence type="ECO:0000255" key="1">
    <source>
        <dbReference type="HAMAP-Rule" id="MF_01454"/>
    </source>
</evidence>
<evidence type="ECO:0000255" key="2">
    <source>
        <dbReference type="PROSITE-ProRule" id="PRU01229"/>
    </source>
</evidence>
<evidence type="ECO:0000255" key="3">
    <source>
        <dbReference type="PROSITE-ProRule" id="PRU01231"/>
    </source>
</evidence>
<evidence type="ECO:0000256" key="4">
    <source>
        <dbReference type="SAM" id="MobiDB-lite"/>
    </source>
</evidence>
<organism>
    <name type="scientific">Mycobacterium bovis (strain BCG / Pasteur 1173P2)</name>
    <dbReference type="NCBI Taxonomy" id="410289"/>
    <lineage>
        <taxon>Bacteria</taxon>
        <taxon>Bacillati</taxon>
        <taxon>Actinomycetota</taxon>
        <taxon>Actinomycetes</taxon>
        <taxon>Mycobacteriales</taxon>
        <taxon>Mycobacteriaceae</taxon>
        <taxon>Mycobacterium</taxon>
        <taxon>Mycobacterium tuberculosis complex</taxon>
    </lineage>
</organism>
<gene>
    <name evidence="1" type="primary">obg</name>
    <name type="ordered locus">BCG_2460c</name>
</gene>
<dbReference type="EC" id="3.6.5.-" evidence="1"/>
<dbReference type="EMBL" id="AM408590">
    <property type="protein sequence ID" value="CAL72448.1"/>
    <property type="molecule type" value="Genomic_DNA"/>
</dbReference>
<dbReference type="SMR" id="A1KLD6"/>
<dbReference type="KEGG" id="mbb:BCG_2460c"/>
<dbReference type="HOGENOM" id="CLU_011747_2_1_11"/>
<dbReference type="Proteomes" id="UP000001472">
    <property type="component" value="Chromosome"/>
</dbReference>
<dbReference type="GO" id="GO:0005737">
    <property type="term" value="C:cytoplasm"/>
    <property type="evidence" value="ECO:0007669"/>
    <property type="project" value="UniProtKB-SubCell"/>
</dbReference>
<dbReference type="GO" id="GO:0005525">
    <property type="term" value="F:GTP binding"/>
    <property type="evidence" value="ECO:0007669"/>
    <property type="project" value="UniProtKB-UniRule"/>
</dbReference>
<dbReference type="GO" id="GO:0003924">
    <property type="term" value="F:GTPase activity"/>
    <property type="evidence" value="ECO:0007669"/>
    <property type="project" value="UniProtKB-UniRule"/>
</dbReference>
<dbReference type="GO" id="GO:0000287">
    <property type="term" value="F:magnesium ion binding"/>
    <property type="evidence" value="ECO:0007669"/>
    <property type="project" value="InterPro"/>
</dbReference>
<dbReference type="GO" id="GO:0042254">
    <property type="term" value="P:ribosome biogenesis"/>
    <property type="evidence" value="ECO:0007669"/>
    <property type="project" value="UniProtKB-UniRule"/>
</dbReference>
<dbReference type="CDD" id="cd01898">
    <property type="entry name" value="Obg"/>
    <property type="match status" value="1"/>
</dbReference>
<dbReference type="FunFam" id="2.70.210.12:FF:000001">
    <property type="entry name" value="GTPase Obg"/>
    <property type="match status" value="1"/>
</dbReference>
<dbReference type="FunFam" id="3.30.300.350:FF:000002">
    <property type="entry name" value="GTPase Obg"/>
    <property type="match status" value="1"/>
</dbReference>
<dbReference type="FunFam" id="3.40.50.300:FF:000515">
    <property type="entry name" value="GTPase Obg"/>
    <property type="match status" value="1"/>
</dbReference>
<dbReference type="Gene3D" id="3.30.300.350">
    <property type="entry name" value="GTP-binding protein OBG, C-terminal domain"/>
    <property type="match status" value="1"/>
</dbReference>
<dbReference type="Gene3D" id="2.70.210.12">
    <property type="entry name" value="GTP1/OBG domain"/>
    <property type="match status" value="1"/>
</dbReference>
<dbReference type="Gene3D" id="3.40.50.300">
    <property type="entry name" value="P-loop containing nucleotide triphosphate hydrolases"/>
    <property type="match status" value="1"/>
</dbReference>
<dbReference type="HAMAP" id="MF_01454">
    <property type="entry name" value="GTPase_Obg"/>
    <property type="match status" value="1"/>
</dbReference>
<dbReference type="InterPro" id="IPR031167">
    <property type="entry name" value="G_OBG"/>
</dbReference>
<dbReference type="InterPro" id="IPR006073">
    <property type="entry name" value="GTP-bd"/>
</dbReference>
<dbReference type="InterPro" id="IPR014100">
    <property type="entry name" value="GTP-bd_Obg/CgtA"/>
</dbReference>
<dbReference type="InterPro" id="IPR036346">
    <property type="entry name" value="GTP-bd_prot_GTP1/OBG_C_sf"/>
</dbReference>
<dbReference type="InterPro" id="IPR006074">
    <property type="entry name" value="GTP1-OBG_CS"/>
</dbReference>
<dbReference type="InterPro" id="IPR006169">
    <property type="entry name" value="GTP1_OBG_dom"/>
</dbReference>
<dbReference type="InterPro" id="IPR036726">
    <property type="entry name" value="GTP1_OBG_dom_sf"/>
</dbReference>
<dbReference type="InterPro" id="IPR045086">
    <property type="entry name" value="OBG_GTPase"/>
</dbReference>
<dbReference type="InterPro" id="IPR015349">
    <property type="entry name" value="OCT_dom"/>
</dbReference>
<dbReference type="InterPro" id="IPR027417">
    <property type="entry name" value="P-loop_NTPase"/>
</dbReference>
<dbReference type="NCBIfam" id="TIGR02729">
    <property type="entry name" value="Obg_CgtA"/>
    <property type="match status" value="1"/>
</dbReference>
<dbReference type="NCBIfam" id="TIGR03595">
    <property type="entry name" value="Obg_CgtA_exten"/>
    <property type="match status" value="1"/>
</dbReference>
<dbReference type="NCBIfam" id="NF008954">
    <property type="entry name" value="PRK12296.1"/>
    <property type="match status" value="1"/>
</dbReference>
<dbReference type="NCBIfam" id="NF008955">
    <property type="entry name" value="PRK12297.1"/>
    <property type="match status" value="1"/>
</dbReference>
<dbReference type="NCBIfam" id="NF008956">
    <property type="entry name" value="PRK12299.1"/>
    <property type="match status" value="1"/>
</dbReference>
<dbReference type="PANTHER" id="PTHR11702">
    <property type="entry name" value="DEVELOPMENTALLY REGULATED GTP-BINDING PROTEIN-RELATED"/>
    <property type="match status" value="1"/>
</dbReference>
<dbReference type="PANTHER" id="PTHR11702:SF31">
    <property type="entry name" value="MITOCHONDRIAL RIBOSOME-ASSOCIATED GTPASE 2"/>
    <property type="match status" value="1"/>
</dbReference>
<dbReference type="Pfam" id="PF09269">
    <property type="entry name" value="DUF1967"/>
    <property type="match status" value="1"/>
</dbReference>
<dbReference type="Pfam" id="PF01018">
    <property type="entry name" value="GTP1_OBG"/>
    <property type="match status" value="1"/>
</dbReference>
<dbReference type="Pfam" id="PF01926">
    <property type="entry name" value="MMR_HSR1"/>
    <property type="match status" value="1"/>
</dbReference>
<dbReference type="PRINTS" id="PR00326">
    <property type="entry name" value="GTP1OBG"/>
</dbReference>
<dbReference type="SUPFAM" id="SSF102741">
    <property type="entry name" value="Obg GTP-binding protein C-terminal domain"/>
    <property type="match status" value="1"/>
</dbReference>
<dbReference type="SUPFAM" id="SSF82051">
    <property type="entry name" value="Obg GTP-binding protein N-terminal domain"/>
    <property type="match status" value="1"/>
</dbReference>
<dbReference type="SUPFAM" id="SSF52540">
    <property type="entry name" value="P-loop containing nucleoside triphosphate hydrolases"/>
    <property type="match status" value="1"/>
</dbReference>
<dbReference type="PROSITE" id="PS51710">
    <property type="entry name" value="G_OBG"/>
    <property type="match status" value="1"/>
</dbReference>
<dbReference type="PROSITE" id="PS00905">
    <property type="entry name" value="GTP1_OBG"/>
    <property type="match status" value="1"/>
</dbReference>
<dbReference type="PROSITE" id="PS51883">
    <property type="entry name" value="OBG"/>
    <property type="match status" value="1"/>
</dbReference>
<dbReference type="PROSITE" id="PS51881">
    <property type="entry name" value="OCT"/>
    <property type="match status" value="1"/>
</dbReference>
<name>OBG_MYCBP</name>
<proteinExistence type="inferred from homology"/>